<sequence length="256" mass="30580">MEVRKINTHNREKKLDDIVYDDFISTLRQIKEGNHQLREEFISEYKPFILKVTSNATGKYIDTRNSDEFSIALSAFNEAIDKFDIEKGYNFFLFSEQVIRRRLIDYSRSNKDDKEYPFSFFDDEYFYNNEKLLSKSYIGFEDIEAREDIEELKKKLQEFGITFLDLVLNVPKHRDSRQLCIRLAKMLAEDEQMYNALMKNKNIPRNELKKKAKVHGRTIGNNRKYIIALCLIFRSNLNLSKRYLEYYTMDGESDLI</sequence>
<gene>
    <name evidence="3" type="primary">sigI1</name>
    <name evidence="6" type="ordered locus">Cthe_0058</name>
</gene>
<protein>
    <recommendedName>
        <fullName evidence="4">RNA polymerase sigma factor SigI1</fullName>
    </recommendedName>
</protein>
<comment type="function">
    <text evidence="1 2">Sigma factors are initiation factors that promote the attachment of RNA polymerase to specific initiation sites and are then released (By similarity). This sigma factor is involved in regulation of cellulosomal genes via an external polysaccharide-sensing mechanism. SigI1 promotes transcription from sigI1 and celS promoters (PubMed:20937888).</text>
</comment>
<comment type="activity regulation">
    <text evidence="2 5">Negatively regulated by the anti-sigma-I factor RsgI1 (PubMed:20937888). Binding of the polysaccharide substrate to RsgI1 may lead to the release and activation of SigI1 (Probable).</text>
</comment>
<comment type="subunit">
    <text evidence="1 2">Interacts with RsgI1.</text>
</comment>
<comment type="subcellular location">
    <subcellularLocation>
        <location evidence="1">Cytoplasm</location>
    </subcellularLocation>
</comment>
<comment type="induction">
    <text evidence="2">Up-regulated in the presence of cellulose.</text>
</comment>
<comment type="similarity">
    <text evidence="1">Belongs to the sigma-70 factor family. SigI subfamily.</text>
</comment>
<feature type="chain" id="PRO_0000436515" description="RNA polymerase sigma factor SigI1">
    <location>
        <begin position="1"/>
        <end position="256"/>
    </location>
</feature>
<feature type="DNA-binding region" description="H-T-H motif" evidence="1">
    <location>
        <begin position="205"/>
        <end position="224"/>
    </location>
</feature>
<feature type="short sequence motif" description="Polymerase core binding" evidence="1">
    <location>
        <begin position="67"/>
        <end position="80"/>
    </location>
</feature>
<feature type="helix" evidence="7">
    <location>
        <begin position="19"/>
        <end position="30"/>
    </location>
</feature>
<feature type="helix" evidence="7">
    <location>
        <begin position="36"/>
        <end position="44"/>
    </location>
</feature>
<feature type="helix" evidence="7">
    <location>
        <begin position="46"/>
        <end position="57"/>
    </location>
</feature>
<feature type="turn" evidence="7">
    <location>
        <begin position="63"/>
        <end position="65"/>
    </location>
</feature>
<feature type="helix" evidence="7">
    <location>
        <begin position="68"/>
        <end position="81"/>
    </location>
</feature>
<feature type="helix" evidence="7">
    <location>
        <begin position="91"/>
        <end position="109"/>
    </location>
</feature>
<feature type="strand" evidence="7">
    <location>
        <begin position="114"/>
        <end position="117"/>
    </location>
</feature>
<feature type="helix" evidence="7">
    <location>
        <begin position="118"/>
        <end position="120"/>
    </location>
</feature>
<feature type="strand" evidence="7">
    <location>
        <begin position="128"/>
        <end position="131"/>
    </location>
</feature>
<feature type="helix" evidence="7">
    <location>
        <begin position="142"/>
        <end position="159"/>
    </location>
</feature>
<feature type="helix" evidence="7">
    <location>
        <begin position="165"/>
        <end position="168"/>
    </location>
</feature>
<feature type="helix" evidence="7">
    <location>
        <begin position="174"/>
        <end position="189"/>
    </location>
</feature>
<feature type="helix" evidence="7">
    <location>
        <begin position="191"/>
        <end position="198"/>
    </location>
</feature>
<feature type="turn" evidence="7">
    <location>
        <begin position="199"/>
        <end position="201"/>
    </location>
</feature>
<feature type="helix" evidence="7">
    <location>
        <begin position="205"/>
        <end position="211"/>
    </location>
</feature>
<feature type="helix" evidence="7">
    <location>
        <begin position="216"/>
        <end position="233"/>
    </location>
</feature>
<feature type="helix" evidence="7">
    <location>
        <begin position="238"/>
        <end position="246"/>
    </location>
</feature>
<reference key="1">
    <citation type="submission" date="2007-02" db="EMBL/GenBank/DDBJ databases">
        <title>Complete sequence of Clostridium thermocellum ATCC 27405.</title>
        <authorList>
            <consortium name="US DOE Joint Genome Institute"/>
            <person name="Copeland A."/>
            <person name="Lucas S."/>
            <person name="Lapidus A."/>
            <person name="Barry K."/>
            <person name="Detter J.C."/>
            <person name="Glavina del Rio T."/>
            <person name="Hammon N."/>
            <person name="Israni S."/>
            <person name="Dalin E."/>
            <person name="Tice H."/>
            <person name="Pitluck S."/>
            <person name="Chertkov O."/>
            <person name="Brettin T."/>
            <person name="Bruce D."/>
            <person name="Han C."/>
            <person name="Tapia R."/>
            <person name="Gilna P."/>
            <person name="Schmutz J."/>
            <person name="Larimer F."/>
            <person name="Land M."/>
            <person name="Hauser L."/>
            <person name="Kyrpides N."/>
            <person name="Mikhailova N."/>
            <person name="Wu J.H.D."/>
            <person name="Newcomb M."/>
            <person name="Richardson P."/>
        </authorList>
    </citation>
    <scope>NUCLEOTIDE SEQUENCE [LARGE SCALE GENOMIC DNA]</scope>
    <source>
        <strain>ATCC 27405 / DSM 1237 / JCM 9322 / NBRC 103400 / NCIMB 10682 / NRRL B-4536 / VPI 7372</strain>
    </source>
</reference>
<reference key="2">
    <citation type="journal article" date="2010" name="FEMS Microbiol. Lett.">
        <title>The unique set of putative membrane-associated anti-sigma factors in Clostridium thermocellum suggests a novel extracellular carbohydrate-sensing mechanism involved in gene regulation.</title>
        <authorList>
            <person name="Kahel-Raifer H."/>
            <person name="Jindou S."/>
            <person name="Bahari L."/>
            <person name="Nataf Y."/>
            <person name="Shoham Y."/>
            <person name="Bayer E.A."/>
            <person name="Borovok I."/>
            <person name="Lamed R."/>
        </authorList>
    </citation>
    <scope>NOMENCLATURE</scope>
    <source>
        <strain>ATCC 27405 / DSM 1237 / JCM 9322 / NBRC 103400 / NCIMB 10682 / NRRL B-4536 / VPI 7372</strain>
    </source>
</reference>
<reference key="3">
    <citation type="journal article" date="2010" name="Proc. Natl. Acad. Sci. U.S.A.">
        <title>Clostridium thermocellum cellulosomal genes are regulated by extracytoplasmic polysaccharides via alternative sigma factors.</title>
        <authorList>
            <person name="Nataf Y."/>
            <person name="Bahari L."/>
            <person name="Kahel-Raifer H."/>
            <person name="Borovok I."/>
            <person name="Lamed R."/>
            <person name="Bayer E.A."/>
            <person name="Sonenshein A.L."/>
            <person name="Shoham Y."/>
        </authorList>
    </citation>
    <scope>FUNCTION</scope>
    <scope>ACTIVITY REGULATION</scope>
    <scope>INTERACTION WITH RSGI1</scope>
    <scope>INDUCTION</scope>
</reference>
<accession>A3DBH0</accession>
<name>SIGI1_ACET2</name>
<evidence type="ECO:0000255" key="1">
    <source>
        <dbReference type="HAMAP-Rule" id="MF_02064"/>
    </source>
</evidence>
<evidence type="ECO:0000269" key="2">
    <source>
    </source>
</evidence>
<evidence type="ECO:0000303" key="3">
    <source>
    </source>
</evidence>
<evidence type="ECO:0000305" key="4"/>
<evidence type="ECO:0000305" key="5">
    <source>
    </source>
</evidence>
<evidence type="ECO:0000312" key="6">
    <source>
        <dbReference type="EMBL" id="ABN51299.1"/>
    </source>
</evidence>
<evidence type="ECO:0007829" key="7">
    <source>
        <dbReference type="PDB" id="8I23"/>
    </source>
</evidence>
<organism>
    <name type="scientific">Acetivibrio thermocellus (strain ATCC 27405 / DSM 1237 / JCM 9322 / NBRC 103400 / NCIMB 10682 / NRRL B-4536 / VPI 7372)</name>
    <name type="common">Clostridium thermocellum</name>
    <dbReference type="NCBI Taxonomy" id="203119"/>
    <lineage>
        <taxon>Bacteria</taxon>
        <taxon>Bacillati</taxon>
        <taxon>Bacillota</taxon>
        <taxon>Clostridia</taxon>
        <taxon>Eubacteriales</taxon>
        <taxon>Oscillospiraceae</taxon>
        <taxon>Acetivibrio</taxon>
    </lineage>
</organism>
<dbReference type="EMBL" id="CP000568">
    <property type="protein sequence ID" value="ABN51299.1"/>
    <property type="molecule type" value="Genomic_DNA"/>
</dbReference>
<dbReference type="RefSeq" id="WP_011837745.1">
    <property type="nucleotide sequence ID" value="NC_009012.1"/>
</dbReference>
<dbReference type="PDB" id="6IVU">
    <property type="method" value="NMR"/>
    <property type="chains" value="B=140-249"/>
</dbReference>
<dbReference type="PDB" id="8I23">
    <property type="method" value="EM"/>
    <property type="resolution" value="3.03 A"/>
    <property type="chains" value="F=1-256"/>
</dbReference>
<dbReference type="PDBsum" id="6IVU"/>
<dbReference type="PDBsum" id="8I23"/>
<dbReference type="BMRB" id="A3DBH0"/>
<dbReference type="EMDB" id="EMD-35130"/>
<dbReference type="SMR" id="A3DBH0"/>
<dbReference type="DIP" id="DIP-59449N"/>
<dbReference type="IntAct" id="A3DBH0">
    <property type="interactions" value="1"/>
</dbReference>
<dbReference type="STRING" id="203119.Cthe_0058"/>
<dbReference type="GeneID" id="35802936"/>
<dbReference type="KEGG" id="cth:Cthe_0058"/>
<dbReference type="eggNOG" id="COG1191">
    <property type="taxonomic scope" value="Bacteria"/>
</dbReference>
<dbReference type="HOGENOM" id="CLU_082361_0_0_9"/>
<dbReference type="OrthoDB" id="3190733at2"/>
<dbReference type="Proteomes" id="UP000002145">
    <property type="component" value="Chromosome"/>
</dbReference>
<dbReference type="GO" id="GO:0005737">
    <property type="term" value="C:cytoplasm"/>
    <property type="evidence" value="ECO:0007669"/>
    <property type="project" value="UniProtKB-SubCell"/>
</dbReference>
<dbReference type="GO" id="GO:0003677">
    <property type="term" value="F:DNA binding"/>
    <property type="evidence" value="ECO:0007669"/>
    <property type="project" value="UniProtKB-UniRule"/>
</dbReference>
<dbReference type="GO" id="GO:0016987">
    <property type="term" value="F:sigma factor activity"/>
    <property type="evidence" value="ECO:0000314"/>
    <property type="project" value="CACAO"/>
</dbReference>
<dbReference type="GO" id="GO:0006352">
    <property type="term" value="P:DNA-templated transcription initiation"/>
    <property type="evidence" value="ECO:0007669"/>
    <property type="project" value="UniProtKB-UniRule"/>
</dbReference>
<dbReference type="Gene3D" id="1.10.1740.10">
    <property type="match status" value="1"/>
</dbReference>
<dbReference type="HAMAP" id="MF_02064">
    <property type="entry name" value="Sigma70_SigI"/>
    <property type="match status" value="1"/>
</dbReference>
<dbReference type="InterPro" id="IPR014244">
    <property type="entry name" value="RNA_pol_sigma-I"/>
</dbReference>
<dbReference type="InterPro" id="IPR013325">
    <property type="entry name" value="RNA_pol_sigma_r2"/>
</dbReference>
<dbReference type="NCBIfam" id="NF006173">
    <property type="entry name" value="PRK08311.2-1"/>
    <property type="match status" value="1"/>
</dbReference>
<dbReference type="NCBIfam" id="TIGR02895">
    <property type="entry name" value="spore_sigI"/>
    <property type="match status" value="1"/>
</dbReference>
<dbReference type="PIRSF" id="PIRSF038953">
    <property type="entry name" value="SigI"/>
    <property type="match status" value="1"/>
</dbReference>
<dbReference type="SUPFAM" id="SSF88946">
    <property type="entry name" value="Sigma2 domain of RNA polymerase sigma factors"/>
    <property type="match status" value="1"/>
</dbReference>
<proteinExistence type="evidence at protein level"/>
<keyword id="KW-0002">3D-structure</keyword>
<keyword id="KW-0963">Cytoplasm</keyword>
<keyword id="KW-0238">DNA-binding</keyword>
<keyword id="KW-1185">Reference proteome</keyword>
<keyword id="KW-0731">Sigma factor</keyword>
<keyword id="KW-0804">Transcription</keyword>
<keyword id="KW-0805">Transcription regulation</keyword>